<dbReference type="EMBL" id="X70355">
    <property type="protein sequence ID" value="CAA49815.1"/>
    <property type="molecule type" value="Genomic_DNA"/>
</dbReference>
<dbReference type="PIR" id="S18316">
    <property type="entry name" value="S18316"/>
</dbReference>
<dbReference type="SMR" id="Q07088"/>
<dbReference type="GO" id="GO:0016984">
    <property type="term" value="F:ribulose-bisphosphate carboxylase activity"/>
    <property type="evidence" value="ECO:0007669"/>
    <property type="project" value="UniProtKB-UniRule"/>
</dbReference>
<dbReference type="GO" id="GO:0019253">
    <property type="term" value="P:reductive pentose-phosphate cycle"/>
    <property type="evidence" value="ECO:0007669"/>
    <property type="project" value="UniProtKB-UniRule"/>
</dbReference>
<dbReference type="CDD" id="cd03527">
    <property type="entry name" value="RuBisCO_small"/>
    <property type="match status" value="1"/>
</dbReference>
<dbReference type="Gene3D" id="3.30.190.10">
    <property type="entry name" value="Ribulose bisphosphate carboxylase, small subunit"/>
    <property type="match status" value="1"/>
</dbReference>
<dbReference type="HAMAP" id="MF_00859">
    <property type="entry name" value="RuBisCO_S_bact"/>
    <property type="match status" value="1"/>
</dbReference>
<dbReference type="InterPro" id="IPR024681">
    <property type="entry name" value="RuBisCO_ssu"/>
</dbReference>
<dbReference type="InterPro" id="IPR000894">
    <property type="entry name" value="RuBisCO_ssu_dom"/>
</dbReference>
<dbReference type="InterPro" id="IPR036385">
    <property type="entry name" value="RuBisCO_ssu_sf"/>
</dbReference>
<dbReference type="PANTHER" id="PTHR31262">
    <property type="entry name" value="RIBULOSE BISPHOSPHATE CARBOXYLASE SMALL CHAIN 1, CHLOROPLASTIC"/>
    <property type="match status" value="1"/>
</dbReference>
<dbReference type="Pfam" id="PF00101">
    <property type="entry name" value="RuBisCO_small"/>
    <property type="match status" value="1"/>
</dbReference>
<dbReference type="SMART" id="SM00961">
    <property type="entry name" value="RuBisCO_small"/>
    <property type="match status" value="1"/>
</dbReference>
<dbReference type="SUPFAM" id="SSF55239">
    <property type="entry name" value="RuBisCO, small subunit"/>
    <property type="match status" value="1"/>
</dbReference>
<name>RBS2_ACIFR</name>
<accession>Q07088</accession>
<evidence type="ECO:0000255" key="1">
    <source>
        <dbReference type="HAMAP-Rule" id="MF_00859"/>
    </source>
</evidence>
<evidence type="ECO:0000305" key="2"/>
<protein>
    <recommendedName>
        <fullName evidence="1">Ribulose bisphosphate carboxylase small subunit 2</fullName>
        <shortName evidence="1">RuBisCO small subunit 2</shortName>
    </recommendedName>
</protein>
<organism>
    <name type="scientific">Acidithiobacillus ferrooxidans</name>
    <name type="common">Thiobacillus ferrooxidans</name>
    <dbReference type="NCBI Taxonomy" id="920"/>
    <lineage>
        <taxon>Bacteria</taxon>
        <taxon>Pseudomonadati</taxon>
        <taxon>Pseudomonadota</taxon>
        <taxon>Acidithiobacillia</taxon>
        <taxon>Acidithiobacillales</taxon>
        <taxon>Acidithiobacillaceae</taxon>
        <taxon>Acidithiobacillus</taxon>
    </lineage>
</organism>
<feature type="chain" id="PRO_0000198630" description="Ribulose bisphosphate carboxylase small subunit 2">
    <location>
        <begin position="1"/>
        <end position="118"/>
    </location>
</feature>
<reference key="1">
    <citation type="journal article" date="1991" name="FEBS Lett.">
        <title>Isolation and nucleotide sequence of the Thiobacillus ferrooxidans genes for the small and large subunits of ribulose 1,5-bisphosphate carboxylase/oxygenase.</title>
        <authorList>
            <person name="Pulgar V."/>
            <person name="Gaete L."/>
            <person name="Allende J."/>
            <person name="Orellana O."/>
            <person name="Jordana X."/>
            <person name="Jedlicki E."/>
        </authorList>
    </citation>
    <scope>NUCLEOTIDE SEQUENCE [GENOMIC DNA]</scope>
</reference>
<keyword id="KW-0113">Calvin cycle</keyword>
<keyword id="KW-0120">Carbon dioxide fixation</keyword>
<gene>
    <name evidence="1" type="primary">cbbS2</name>
    <name type="synonym">rbcS2</name>
</gene>
<comment type="function">
    <text evidence="1">RuBisCO catalyzes two reactions: the carboxylation of D-ribulose 1,5-bisphosphate, the primary event in carbon dioxide fixation, as well as the oxidative fragmentation of the pentose substrate. Both reactions occur simultaneously and in competition at the same active site. Although the small subunit is not catalytic it is essential for maximal activity.</text>
</comment>
<comment type="subunit">
    <text evidence="1">Heterohexadecamer of 8 large and 8 small subunits.</text>
</comment>
<comment type="miscellaneous">
    <text evidence="1">The basic functional RuBisCO is composed of a large chain homodimer in a 'head-to-tail' conformation. In form I RuBisCO this homodimer is arranged in a barrel-like tetramer with the small subunits forming a tetrameric 'cap' on each end of the 'barrel'.</text>
</comment>
<comment type="similarity">
    <text evidence="1">Belongs to the RuBisCO small chain family.</text>
</comment>
<comment type="caution">
    <text evidence="2">In A.ferrooxidans two similar set of genes code for RuBisCO large and small chains: the rbcL1-rbcS1 and the rbcL2-rbcS2 sets.</text>
</comment>
<proteinExistence type="inferred from homology"/>
<sequence>MSEVQDYKSRLSDPASAKFETLSYLPALTADEIRQQVAYIVSKGWNPAVEHTEPENAFGNYWYMWKLPMFGETDVDTILKEAERCHKRNPHNHVRIVGYDNFKQSQGTSLVVYRGKTV</sequence>